<evidence type="ECO:0000250" key="1">
    <source>
        <dbReference type="UniProtKB" id="Q10243"/>
    </source>
</evidence>
<evidence type="ECO:0000269" key="2">
    <source>
    </source>
</evidence>
<evidence type="ECO:0000269" key="3">
    <source>
    </source>
</evidence>
<evidence type="ECO:0000303" key="4">
    <source>
    </source>
</evidence>
<evidence type="ECO:0000305" key="5"/>
<sequence>MLSTIFGSVCSIDLKIDADDNKKFAFLRKDKKGEKCPIFSDGEDINGTATISLKPGKKFEHYGIKLELIGQINILNDKANSYDFFSISKDLEPPGFLVESKQFKWKFSAVDKQHESYFGTNVQLRYFVRLNIIKGYSGNIQKEIDFIVQNLCIPPEINNTIKMEVGIEDCLHIEFEYDKSKYHLKDVVVGKVYFLLVRIKIKHMELDIIKMETSGVGKNYTTETVTLSKFEIMDGSPIKSECIPVRLYLSGFDLTPTYKNIQNKFSVKYYINLIIVDEEERRYFKKQEIFLWRKKMG</sequence>
<dbReference type="EMBL" id="LN999947">
    <property type="protein sequence ID" value="CZT99658.1"/>
    <property type="molecule type" value="Genomic_DNA"/>
</dbReference>
<dbReference type="RefSeq" id="XP_001350887.1">
    <property type="nucleotide sequence ID" value="XM_001350851.1"/>
</dbReference>
<dbReference type="SMR" id="Q8I4T1"/>
<dbReference type="FunCoup" id="Q8I4T1">
    <property type="interactions" value="24"/>
</dbReference>
<dbReference type="STRING" id="36329.Q8I4T1"/>
<dbReference type="PaxDb" id="5833-PFL2415w"/>
<dbReference type="EnsemblProtists" id="CZT99658">
    <property type="protein sequence ID" value="CZT99658"/>
    <property type="gene ID" value="PF3D7_1250300"/>
</dbReference>
<dbReference type="GeneID" id="811535"/>
<dbReference type="KEGG" id="pfa:PF3D7_1250300"/>
<dbReference type="VEuPathDB" id="PlasmoDB:PF3D7_1250300"/>
<dbReference type="HOGENOM" id="CLU_031077_2_0_1"/>
<dbReference type="OMA" id="FKWKFSS"/>
<dbReference type="OrthoDB" id="3821113at2759"/>
<dbReference type="PhylomeDB" id="Q8I4T1"/>
<dbReference type="Proteomes" id="UP000001450">
    <property type="component" value="Chromosome 12"/>
</dbReference>
<dbReference type="GO" id="GO:0005829">
    <property type="term" value="C:cytosol"/>
    <property type="evidence" value="ECO:0007669"/>
    <property type="project" value="GOC"/>
</dbReference>
<dbReference type="GO" id="GO:0005768">
    <property type="term" value="C:endosome"/>
    <property type="evidence" value="ECO:0000318"/>
    <property type="project" value="GO_Central"/>
</dbReference>
<dbReference type="GO" id="GO:0030904">
    <property type="term" value="C:retromer complex"/>
    <property type="evidence" value="ECO:0000314"/>
    <property type="project" value="UniProtKB"/>
</dbReference>
<dbReference type="GO" id="GO:0006886">
    <property type="term" value="P:intracellular protein transport"/>
    <property type="evidence" value="ECO:0000318"/>
    <property type="project" value="GO_Central"/>
</dbReference>
<dbReference type="GO" id="GO:0042147">
    <property type="term" value="P:retrograde transport, endosome to Golgi"/>
    <property type="evidence" value="ECO:0000318"/>
    <property type="project" value="GO_Central"/>
</dbReference>
<dbReference type="FunFam" id="2.60.40.640:FF:000015">
    <property type="entry name" value="Vacuolar protein sorting-associated protein 26"/>
    <property type="match status" value="1"/>
</dbReference>
<dbReference type="FunFam" id="2.60.40.640:FF:000021">
    <property type="entry name" value="Vacuolar protein sorting-associated protein 26"/>
    <property type="match status" value="1"/>
</dbReference>
<dbReference type="Gene3D" id="2.60.40.640">
    <property type="match status" value="2"/>
</dbReference>
<dbReference type="InterPro" id="IPR014752">
    <property type="entry name" value="Arrestin-like_C"/>
</dbReference>
<dbReference type="InterPro" id="IPR028934">
    <property type="entry name" value="Vps26-related"/>
</dbReference>
<dbReference type="PANTHER" id="PTHR12233">
    <property type="entry name" value="VACUOLAR PROTEIN SORTING 26 RELATED"/>
    <property type="match status" value="1"/>
</dbReference>
<dbReference type="Pfam" id="PF03643">
    <property type="entry name" value="Vps26"/>
    <property type="match status" value="1"/>
</dbReference>
<protein>
    <recommendedName>
        <fullName evidence="4">Vacuolar protein sorting-associated protein 26</fullName>
    </recommendedName>
</protein>
<keyword id="KW-0653">Protein transport</keyword>
<keyword id="KW-1185">Reference proteome</keyword>
<keyword id="KW-0813">Transport</keyword>
<accession>Q8I4T1</accession>
<accession>A0A144A4V4</accession>
<gene>
    <name evidence="4" type="primary">VPS26</name>
    <name type="ORF">PF3D7_1250300</name>
    <name type="ORF">PFL2415w</name>
</gene>
<feature type="chain" id="PRO_0000073012" description="Vacuolar protein sorting-associated protein 26">
    <location>
        <begin position="1"/>
        <end position="297"/>
    </location>
</feature>
<comment type="function">
    <text evidence="1">Plays a role in vesicular protein sorting (By similarity). Component of the membrane-associated retromer complex which is essential in endosome-to-Golgi retrograde transport (By similarity).</text>
</comment>
<comment type="subunit">
    <text evidence="2 3">Component of the retromer complex, composed of VPS26, VPS29 and VPS35 (PubMed:29654975). As part of the retromer complex, interacts with the sorting receptor SORTLR/sortilin (PubMed:29654975). Interacts with GTPase RAB7 (PubMed:32512169).</text>
</comment>
<comment type="similarity">
    <text evidence="5">Belongs to the VPS26 family.</text>
</comment>
<name>VPS26_PLAF7</name>
<proteinExistence type="evidence at protein level"/>
<organism>
    <name type="scientific">Plasmodium falciparum (isolate 3D7)</name>
    <dbReference type="NCBI Taxonomy" id="36329"/>
    <lineage>
        <taxon>Eukaryota</taxon>
        <taxon>Sar</taxon>
        <taxon>Alveolata</taxon>
        <taxon>Apicomplexa</taxon>
        <taxon>Aconoidasida</taxon>
        <taxon>Haemosporida</taxon>
        <taxon>Plasmodiidae</taxon>
        <taxon>Plasmodium</taxon>
        <taxon>Plasmodium (Laverania)</taxon>
    </lineage>
</organism>
<reference key="1">
    <citation type="journal article" date="2002" name="Nature">
        <title>Genome sequence of the human malaria parasite Plasmodium falciparum.</title>
        <authorList>
            <person name="Gardner M.J."/>
            <person name="Hall N."/>
            <person name="Fung E."/>
            <person name="White O."/>
            <person name="Berriman M."/>
            <person name="Hyman R.W."/>
            <person name="Carlton J.M."/>
            <person name="Pain A."/>
            <person name="Nelson K.E."/>
            <person name="Bowman S."/>
            <person name="Paulsen I.T."/>
            <person name="James K.D."/>
            <person name="Eisen J.A."/>
            <person name="Rutherford K.M."/>
            <person name="Salzberg S.L."/>
            <person name="Craig A."/>
            <person name="Kyes S."/>
            <person name="Chan M.-S."/>
            <person name="Nene V."/>
            <person name="Shallom S.J."/>
            <person name="Suh B."/>
            <person name="Peterson J."/>
            <person name="Angiuoli S."/>
            <person name="Pertea M."/>
            <person name="Allen J."/>
            <person name="Selengut J."/>
            <person name="Haft D."/>
            <person name="Mather M.W."/>
            <person name="Vaidya A.B."/>
            <person name="Martin D.M.A."/>
            <person name="Fairlamb A.H."/>
            <person name="Fraunholz M.J."/>
            <person name="Roos D.S."/>
            <person name="Ralph S.A."/>
            <person name="McFadden G.I."/>
            <person name="Cummings L.M."/>
            <person name="Subramanian G.M."/>
            <person name="Mungall C."/>
            <person name="Venter J.C."/>
            <person name="Carucci D.J."/>
            <person name="Hoffman S.L."/>
            <person name="Newbold C."/>
            <person name="Davis R.W."/>
            <person name="Fraser C.M."/>
            <person name="Barrell B.G."/>
        </authorList>
    </citation>
    <scope>NUCLEOTIDE SEQUENCE [LARGE SCALE GENOMIC DNA]</scope>
    <source>
        <strain>3D7</strain>
    </source>
</reference>
<reference key="2">
    <citation type="journal article" date="2018" name="Biochim. Biophys. Acta">
        <title>Detection of retromer assembly in Plasmodium falciparum by immunosensing coupled to Surface Plasmon Resonance.</title>
        <authorList>
            <person name="Iqbal M.S."/>
            <person name="Siddiqui A.A."/>
            <person name="Banerjee C."/>
            <person name="Nag S."/>
            <person name="Mazumder S."/>
            <person name="De R."/>
            <person name="Saha S.J."/>
            <person name="Karri S.K."/>
            <person name="Bandyopadhyay U."/>
        </authorList>
    </citation>
    <scope>IDENTIFICATION IN THE RETROMER COMPLEX</scope>
    <scope>INTERACTION WITH SORTLR</scope>
</reference>
<reference key="3">
    <citation type="journal article" date="2020" name="Biochim. Biophys. Acta">
        <title>Rab7 of Plasmodium falciparum is involved in its retromer complex assembly near the digestive vacuole.</title>
        <authorList>
            <person name="Siddiqui A.A."/>
            <person name="Saha D."/>
            <person name="Iqbal M.S."/>
            <person name="Saha S.J."/>
            <person name="Sarkar S."/>
            <person name="Banerjee C."/>
            <person name="Nag S."/>
            <person name="Mazumder S."/>
            <person name="De R."/>
            <person name="Pramanik S."/>
            <person name="Debsharma S."/>
            <person name="Bandyopadhyay U."/>
        </authorList>
    </citation>
    <scope>INTERACTION WITH RAB7</scope>
</reference>